<gene>
    <name evidence="1" type="primary">purH</name>
    <name type="ordered locus">Helmi_29820</name>
    <name type="ORF">HM1_3106</name>
</gene>
<evidence type="ECO:0000255" key="1">
    <source>
        <dbReference type="HAMAP-Rule" id="MF_00139"/>
    </source>
</evidence>
<evidence type="ECO:0000255" key="2">
    <source>
        <dbReference type="PROSITE-ProRule" id="PRU01202"/>
    </source>
</evidence>
<sequence length="527" mass="56109">MNRRALISVSDKTGVVDFARGLADLGFEIVSTGGTYQTIKAAGVPVTYVTEITGFPEILDGRVKTLHPKVHGGILARRTPEHLAQLEAHAIVPIDVVAVNLYPFRETVAKPGVTREEAVENIDIGGPAMVRASAKNHESVAIIVNPDRYATVLAELQQNGVVSEATRRALAREAFAHTAEYDAAIAAYLAAEAGDDDPFAGIFAPGKVEKVQDLRYGENPHQKAAFYRERGYRGAGAGTAKQRWGKELSFNNLLDLNAALELVREFDRPAAAIIKHNNPCGVAVAATLKEAYEKAFAADPVSAFGGIIAFNVAVDADTANEVVKTFMEAVIAPSFDEAALEILQQKKGLRIMETGPLADSAPATADVKKIRGGFLVQEADLGDVTAEQIQVVTERAPEEGELADLLFAWKVVKHVKSNAIVIAKDGVAIGVGAGQMNRVGSAQIALEQAKASRAFGGDSVDHNNPAQGAVLASDAFLPFKDTVETAARYGIRAIIQPGGSVRDAESIEACNRLGVAMVFTGMRHFKH</sequence>
<name>PUR9_HELMI</name>
<dbReference type="EC" id="2.1.2.3" evidence="1"/>
<dbReference type="EC" id="3.5.4.10" evidence="1"/>
<dbReference type="EMBL" id="CP000930">
    <property type="protein sequence ID" value="ABZ85607.1"/>
    <property type="molecule type" value="Genomic_DNA"/>
</dbReference>
<dbReference type="RefSeq" id="WP_012284078.1">
    <property type="nucleotide sequence ID" value="NC_010337.2"/>
</dbReference>
<dbReference type="SMR" id="B0TEC5"/>
<dbReference type="STRING" id="498761.HM1_3106"/>
<dbReference type="KEGG" id="hmo:HM1_3106"/>
<dbReference type="eggNOG" id="COG0138">
    <property type="taxonomic scope" value="Bacteria"/>
</dbReference>
<dbReference type="HOGENOM" id="CLU_016316_5_2_9"/>
<dbReference type="OrthoDB" id="9802065at2"/>
<dbReference type="UniPathway" id="UPA00074">
    <property type="reaction ID" value="UER00133"/>
</dbReference>
<dbReference type="UniPathway" id="UPA00074">
    <property type="reaction ID" value="UER00135"/>
</dbReference>
<dbReference type="Proteomes" id="UP000008550">
    <property type="component" value="Chromosome"/>
</dbReference>
<dbReference type="GO" id="GO:0005829">
    <property type="term" value="C:cytosol"/>
    <property type="evidence" value="ECO:0007669"/>
    <property type="project" value="TreeGrafter"/>
</dbReference>
<dbReference type="GO" id="GO:0003937">
    <property type="term" value="F:IMP cyclohydrolase activity"/>
    <property type="evidence" value="ECO:0007669"/>
    <property type="project" value="UniProtKB-UniRule"/>
</dbReference>
<dbReference type="GO" id="GO:0004643">
    <property type="term" value="F:phosphoribosylaminoimidazolecarboxamide formyltransferase activity"/>
    <property type="evidence" value="ECO:0007669"/>
    <property type="project" value="UniProtKB-UniRule"/>
</dbReference>
<dbReference type="GO" id="GO:0006189">
    <property type="term" value="P:'de novo' IMP biosynthetic process"/>
    <property type="evidence" value="ECO:0007669"/>
    <property type="project" value="UniProtKB-UniRule"/>
</dbReference>
<dbReference type="CDD" id="cd01421">
    <property type="entry name" value="IMPCH"/>
    <property type="match status" value="1"/>
</dbReference>
<dbReference type="FunFam" id="3.40.140.20:FF:000001">
    <property type="entry name" value="Bifunctional purine biosynthesis protein PurH"/>
    <property type="match status" value="1"/>
</dbReference>
<dbReference type="FunFam" id="3.40.140.20:FF:000002">
    <property type="entry name" value="Bifunctional purine biosynthesis protein PurH"/>
    <property type="match status" value="1"/>
</dbReference>
<dbReference type="FunFam" id="3.40.50.1380:FF:000001">
    <property type="entry name" value="Bifunctional purine biosynthesis protein PurH"/>
    <property type="match status" value="1"/>
</dbReference>
<dbReference type="Gene3D" id="3.40.140.20">
    <property type="match status" value="2"/>
</dbReference>
<dbReference type="Gene3D" id="3.40.50.1380">
    <property type="entry name" value="Methylglyoxal synthase-like domain"/>
    <property type="match status" value="1"/>
</dbReference>
<dbReference type="HAMAP" id="MF_00139">
    <property type="entry name" value="PurH"/>
    <property type="match status" value="1"/>
</dbReference>
<dbReference type="InterPro" id="IPR024051">
    <property type="entry name" value="AICAR_Tfase_dup_dom_sf"/>
</dbReference>
<dbReference type="InterPro" id="IPR016193">
    <property type="entry name" value="Cytidine_deaminase-like"/>
</dbReference>
<dbReference type="InterPro" id="IPR011607">
    <property type="entry name" value="MGS-like_dom"/>
</dbReference>
<dbReference type="InterPro" id="IPR036914">
    <property type="entry name" value="MGS-like_dom_sf"/>
</dbReference>
<dbReference type="InterPro" id="IPR002695">
    <property type="entry name" value="PurH-like"/>
</dbReference>
<dbReference type="NCBIfam" id="NF002049">
    <property type="entry name" value="PRK00881.1"/>
    <property type="match status" value="1"/>
</dbReference>
<dbReference type="NCBIfam" id="TIGR00355">
    <property type="entry name" value="purH"/>
    <property type="match status" value="1"/>
</dbReference>
<dbReference type="PANTHER" id="PTHR11692:SF0">
    <property type="entry name" value="BIFUNCTIONAL PURINE BIOSYNTHESIS PROTEIN ATIC"/>
    <property type="match status" value="1"/>
</dbReference>
<dbReference type="PANTHER" id="PTHR11692">
    <property type="entry name" value="BIFUNCTIONAL PURINE BIOSYNTHESIS PROTEIN PURH"/>
    <property type="match status" value="1"/>
</dbReference>
<dbReference type="Pfam" id="PF01808">
    <property type="entry name" value="AICARFT_IMPCHas"/>
    <property type="match status" value="1"/>
</dbReference>
<dbReference type="Pfam" id="PF02142">
    <property type="entry name" value="MGS"/>
    <property type="match status" value="1"/>
</dbReference>
<dbReference type="PIRSF" id="PIRSF000414">
    <property type="entry name" value="AICARFT_IMPCHas"/>
    <property type="match status" value="1"/>
</dbReference>
<dbReference type="SMART" id="SM00798">
    <property type="entry name" value="AICARFT_IMPCHas"/>
    <property type="match status" value="1"/>
</dbReference>
<dbReference type="SMART" id="SM00851">
    <property type="entry name" value="MGS"/>
    <property type="match status" value="1"/>
</dbReference>
<dbReference type="SUPFAM" id="SSF53927">
    <property type="entry name" value="Cytidine deaminase-like"/>
    <property type="match status" value="1"/>
</dbReference>
<dbReference type="SUPFAM" id="SSF52335">
    <property type="entry name" value="Methylglyoxal synthase-like"/>
    <property type="match status" value="1"/>
</dbReference>
<dbReference type="PROSITE" id="PS51855">
    <property type="entry name" value="MGS"/>
    <property type="match status" value="1"/>
</dbReference>
<reference key="1">
    <citation type="journal article" date="2008" name="J. Bacteriol.">
        <title>The genome of Heliobacterium modesticaldum, a phototrophic representative of the Firmicutes containing the simplest photosynthetic apparatus.</title>
        <authorList>
            <person name="Sattley W.M."/>
            <person name="Madigan M.T."/>
            <person name="Swingley W.D."/>
            <person name="Cheung P.C."/>
            <person name="Clocksin K.M."/>
            <person name="Conrad A.L."/>
            <person name="Dejesa L.C."/>
            <person name="Honchak B.M."/>
            <person name="Jung D.O."/>
            <person name="Karbach L.E."/>
            <person name="Kurdoglu A."/>
            <person name="Lahiri S."/>
            <person name="Mastrian S.D."/>
            <person name="Page L.E."/>
            <person name="Taylor H.L."/>
            <person name="Wang Z.T."/>
            <person name="Raymond J."/>
            <person name="Chen M."/>
            <person name="Blankenship R.E."/>
            <person name="Touchman J.W."/>
        </authorList>
    </citation>
    <scope>NUCLEOTIDE SEQUENCE [LARGE SCALE GENOMIC DNA]</scope>
    <source>
        <strain>ATCC 51547 / Ice1</strain>
    </source>
</reference>
<proteinExistence type="inferred from homology"/>
<accession>B0TEC5</accession>
<comment type="catalytic activity">
    <reaction evidence="1">
        <text>(6R)-10-formyltetrahydrofolate + 5-amino-1-(5-phospho-beta-D-ribosyl)imidazole-4-carboxamide = 5-formamido-1-(5-phospho-D-ribosyl)imidazole-4-carboxamide + (6S)-5,6,7,8-tetrahydrofolate</text>
        <dbReference type="Rhea" id="RHEA:22192"/>
        <dbReference type="ChEBI" id="CHEBI:57453"/>
        <dbReference type="ChEBI" id="CHEBI:58467"/>
        <dbReference type="ChEBI" id="CHEBI:58475"/>
        <dbReference type="ChEBI" id="CHEBI:195366"/>
        <dbReference type="EC" id="2.1.2.3"/>
    </reaction>
</comment>
<comment type="catalytic activity">
    <reaction evidence="1">
        <text>IMP + H2O = 5-formamido-1-(5-phospho-D-ribosyl)imidazole-4-carboxamide</text>
        <dbReference type="Rhea" id="RHEA:18445"/>
        <dbReference type="ChEBI" id="CHEBI:15377"/>
        <dbReference type="ChEBI" id="CHEBI:58053"/>
        <dbReference type="ChEBI" id="CHEBI:58467"/>
        <dbReference type="EC" id="3.5.4.10"/>
    </reaction>
</comment>
<comment type="pathway">
    <text evidence="1">Purine metabolism; IMP biosynthesis via de novo pathway; 5-formamido-1-(5-phospho-D-ribosyl)imidazole-4-carboxamide from 5-amino-1-(5-phospho-D-ribosyl)imidazole-4-carboxamide (10-formyl THF route): step 1/1.</text>
</comment>
<comment type="pathway">
    <text evidence="1">Purine metabolism; IMP biosynthesis via de novo pathway; IMP from 5-formamido-1-(5-phospho-D-ribosyl)imidazole-4-carboxamide: step 1/1.</text>
</comment>
<comment type="domain">
    <text evidence="1">The IMP cyclohydrolase activity resides in the N-terminal region.</text>
</comment>
<comment type="similarity">
    <text evidence="1">Belongs to the PurH family.</text>
</comment>
<feature type="chain" id="PRO_1000096066" description="Bifunctional purine biosynthesis protein PurH">
    <location>
        <begin position="1"/>
        <end position="527"/>
    </location>
</feature>
<feature type="domain" description="MGS-like" evidence="2">
    <location>
        <begin position="1"/>
        <end position="144"/>
    </location>
</feature>
<protein>
    <recommendedName>
        <fullName evidence="1">Bifunctional purine biosynthesis protein PurH</fullName>
    </recommendedName>
    <domain>
        <recommendedName>
            <fullName evidence="1">Phosphoribosylaminoimidazolecarboxamide formyltransferase</fullName>
            <ecNumber evidence="1">2.1.2.3</ecNumber>
        </recommendedName>
        <alternativeName>
            <fullName evidence="1">AICAR transformylase</fullName>
        </alternativeName>
    </domain>
    <domain>
        <recommendedName>
            <fullName evidence="1">IMP cyclohydrolase</fullName>
            <ecNumber evidence="1">3.5.4.10</ecNumber>
        </recommendedName>
        <alternativeName>
            <fullName evidence="1">ATIC</fullName>
        </alternativeName>
        <alternativeName>
            <fullName evidence="1">IMP synthase</fullName>
        </alternativeName>
        <alternativeName>
            <fullName evidence="1">Inosinicase</fullName>
        </alternativeName>
    </domain>
</protein>
<keyword id="KW-0378">Hydrolase</keyword>
<keyword id="KW-0511">Multifunctional enzyme</keyword>
<keyword id="KW-0658">Purine biosynthesis</keyword>
<keyword id="KW-1185">Reference proteome</keyword>
<keyword id="KW-0808">Transferase</keyword>
<organism>
    <name type="scientific">Heliobacterium modesticaldum (strain ATCC 51547 / Ice1)</name>
    <dbReference type="NCBI Taxonomy" id="498761"/>
    <lineage>
        <taxon>Bacteria</taxon>
        <taxon>Bacillati</taxon>
        <taxon>Bacillota</taxon>
        <taxon>Clostridia</taxon>
        <taxon>Eubacteriales</taxon>
        <taxon>Heliobacteriaceae</taxon>
        <taxon>Heliomicrobium</taxon>
    </lineage>
</organism>